<accession>O94291</accession>
<protein>
    <recommendedName>
        <fullName>Sorting nexin-3</fullName>
    </recommendedName>
</protein>
<reference key="1">
    <citation type="journal article" date="2002" name="Nature">
        <title>The genome sequence of Schizosaccharomyces pombe.</title>
        <authorList>
            <person name="Wood V."/>
            <person name="Gwilliam R."/>
            <person name="Rajandream M.A."/>
            <person name="Lyne M.H."/>
            <person name="Lyne R."/>
            <person name="Stewart A."/>
            <person name="Sgouros J.G."/>
            <person name="Peat N."/>
            <person name="Hayles J."/>
            <person name="Baker S.G."/>
            <person name="Basham D."/>
            <person name="Bowman S."/>
            <person name="Brooks K."/>
            <person name="Brown D."/>
            <person name="Brown S."/>
            <person name="Chillingworth T."/>
            <person name="Churcher C.M."/>
            <person name="Collins M."/>
            <person name="Connor R."/>
            <person name="Cronin A."/>
            <person name="Davis P."/>
            <person name="Feltwell T."/>
            <person name="Fraser A."/>
            <person name="Gentles S."/>
            <person name="Goble A."/>
            <person name="Hamlin N."/>
            <person name="Harris D.E."/>
            <person name="Hidalgo J."/>
            <person name="Hodgson G."/>
            <person name="Holroyd S."/>
            <person name="Hornsby T."/>
            <person name="Howarth S."/>
            <person name="Huckle E.J."/>
            <person name="Hunt S."/>
            <person name="Jagels K."/>
            <person name="James K.D."/>
            <person name="Jones L."/>
            <person name="Jones M."/>
            <person name="Leather S."/>
            <person name="McDonald S."/>
            <person name="McLean J."/>
            <person name="Mooney P."/>
            <person name="Moule S."/>
            <person name="Mungall K.L."/>
            <person name="Murphy L.D."/>
            <person name="Niblett D."/>
            <person name="Odell C."/>
            <person name="Oliver K."/>
            <person name="O'Neil S."/>
            <person name="Pearson D."/>
            <person name="Quail M.A."/>
            <person name="Rabbinowitsch E."/>
            <person name="Rutherford K.M."/>
            <person name="Rutter S."/>
            <person name="Saunders D."/>
            <person name="Seeger K."/>
            <person name="Sharp S."/>
            <person name="Skelton J."/>
            <person name="Simmonds M.N."/>
            <person name="Squares R."/>
            <person name="Squares S."/>
            <person name="Stevens K."/>
            <person name="Taylor K."/>
            <person name="Taylor R.G."/>
            <person name="Tivey A."/>
            <person name="Walsh S.V."/>
            <person name="Warren T."/>
            <person name="Whitehead S."/>
            <person name="Woodward J.R."/>
            <person name="Volckaert G."/>
            <person name="Aert R."/>
            <person name="Robben J."/>
            <person name="Grymonprez B."/>
            <person name="Weltjens I."/>
            <person name="Vanstreels E."/>
            <person name="Rieger M."/>
            <person name="Schaefer M."/>
            <person name="Mueller-Auer S."/>
            <person name="Gabel C."/>
            <person name="Fuchs M."/>
            <person name="Duesterhoeft A."/>
            <person name="Fritzc C."/>
            <person name="Holzer E."/>
            <person name="Moestl D."/>
            <person name="Hilbert H."/>
            <person name="Borzym K."/>
            <person name="Langer I."/>
            <person name="Beck A."/>
            <person name="Lehrach H."/>
            <person name="Reinhardt R."/>
            <person name="Pohl T.M."/>
            <person name="Eger P."/>
            <person name="Zimmermann W."/>
            <person name="Wedler H."/>
            <person name="Wambutt R."/>
            <person name="Purnelle B."/>
            <person name="Goffeau A."/>
            <person name="Cadieu E."/>
            <person name="Dreano S."/>
            <person name="Gloux S."/>
            <person name="Lelaure V."/>
            <person name="Mottier S."/>
            <person name="Galibert F."/>
            <person name="Aves S.J."/>
            <person name="Xiang Z."/>
            <person name="Hunt C."/>
            <person name="Moore K."/>
            <person name="Hurst S.M."/>
            <person name="Lucas M."/>
            <person name="Rochet M."/>
            <person name="Gaillardin C."/>
            <person name="Tallada V.A."/>
            <person name="Garzon A."/>
            <person name="Thode G."/>
            <person name="Daga R.R."/>
            <person name="Cruzado L."/>
            <person name="Jimenez J."/>
            <person name="Sanchez M."/>
            <person name="del Rey F."/>
            <person name="Benito J."/>
            <person name="Dominguez A."/>
            <person name="Revuelta J.L."/>
            <person name="Moreno S."/>
            <person name="Armstrong J."/>
            <person name="Forsburg S.L."/>
            <person name="Cerutti L."/>
            <person name="Lowe T."/>
            <person name="McCombie W.R."/>
            <person name="Paulsen I."/>
            <person name="Potashkin J."/>
            <person name="Shpakovski G.V."/>
            <person name="Ussery D."/>
            <person name="Barrell B.G."/>
            <person name="Nurse P."/>
        </authorList>
    </citation>
    <scope>NUCLEOTIDE SEQUENCE [LARGE SCALE GENOMIC DNA]</scope>
    <source>
        <strain>972 / ATCC 24843</strain>
    </source>
</reference>
<gene>
    <name type="primary">snx3</name>
    <name type="synonym">grd19</name>
    <name type="ORF">SPBC887.06c</name>
</gene>
<proteinExistence type="inferred from homology"/>
<keyword id="KW-0963">Cytoplasm</keyword>
<keyword id="KW-0333">Golgi apparatus</keyword>
<keyword id="KW-0446">Lipid-binding</keyword>
<keyword id="KW-0472">Membrane</keyword>
<keyword id="KW-0653">Protein transport</keyword>
<keyword id="KW-1185">Reference proteome</keyword>
<keyword id="KW-0813">Transport</keyword>
<dbReference type="EMBL" id="CU329671">
    <property type="protein sequence ID" value="CAA21891.1"/>
    <property type="molecule type" value="Genomic_DNA"/>
</dbReference>
<dbReference type="PIR" id="T40731">
    <property type="entry name" value="T40731"/>
</dbReference>
<dbReference type="RefSeq" id="NP_596480.1">
    <property type="nucleotide sequence ID" value="NM_001022400.2"/>
</dbReference>
<dbReference type="SMR" id="O94291"/>
<dbReference type="BioGRID" id="277724">
    <property type="interactions" value="4"/>
</dbReference>
<dbReference type="FunCoup" id="O94291">
    <property type="interactions" value="225"/>
</dbReference>
<dbReference type="STRING" id="284812.O94291"/>
<dbReference type="iPTMnet" id="O94291"/>
<dbReference type="PaxDb" id="4896-SPBC887.06c.1"/>
<dbReference type="EnsemblFungi" id="SPBC887.06c.1">
    <property type="protein sequence ID" value="SPBC887.06c.1:pep"/>
    <property type="gene ID" value="SPBC887.06c"/>
</dbReference>
<dbReference type="GeneID" id="2541210"/>
<dbReference type="KEGG" id="spo:2541210"/>
<dbReference type="PomBase" id="SPBC887.06c">
    <property type="gene designation" value="snx3"/>
</dbReference>
<dbReference type="VEuPathDB" id="FungiDB:SPBC887.06c"/>
<dbReference type="eggNOG" id="KOG2527">
    <property type="taxonomic scope" value="Eukaryota"/>
</dbReference>
<dbReference type="HOGENOM" id="CLU_057172_2_2_1"/>
<dbReference type="InParanoid" id="O94291"/>
<dbReference type="OMA" id="NMYTDYE"/>
<dbReference type="PhylomeDB" id="O94291"/>
<dbReference type="Reactome" id="R-SPO-3238698">
    <property type="pathway name" value="WNT ligand biogenesis and trafficking"/>
</dbReference>
<dbReference type="Reactome" id="R-SPO-5689880">
    <property type="pathway name" value="Ub-specific processing proteases"/>
</dbReference>
<dbReference type="PRO" id="PR:O94291"/>
<dbReference type="Proteomes" id="UP000002485">
    <property type="component" value="Chromosome II"/>
</dbReference>
<dbReference type="GO" id="GO:0005829">
    <property type="term" value="C:cytosol"/>
    <property type="evidence" value="ECO:0007005"/>
    <property type="project" value="PomBase"/>
</dbReference>
<dbReference type="GO" id="GO:0031901">
    <property type="term" value="C:early endosome membrane"/>
    <property type="evidence" value="ECO:0000318"/>
    <property type="project" value="GO_Central"/>
</dbReference>
<dbReference type="GO" id="GO:0000139">
    <property type="term" value="C:Golgi membrane"/>
    <property type="evidence" value="ECO:0007669"/>
    <property type="project" value="UniProtKB-SubCell"/>
</dbReference>
<dbReference type="GO" id="GO:0005634">
    <property type="term" value="C:nucleus"/>
    <property type="evidence" value="ECO:0007005"/>
    <property type="project" value="PomBase"/>
</dbReference>
<dbReference type="GO" id="GO:0030904">
    <property type="term" value="C:retromer complex"/>
    <property type="evidence" value="ECO:0000318"/>
    <property type="project" value="GO_Central"/>
</dbReference>
<dbReference type="GO" id="GO:0032266">
    <property type="term" value="F:phosphatidylinositol-3-phosphate binding"/>
    <property type="evidence" value="ECO:0000318"/>
    <property type="project" value="GO_Central"/>
</dbReference>
<dbReference type="GO" id="GO:0032456">
    <property type="term" value="P:endocytic recycling"/>
    <property type="evidence" value="ECO:0000318"/>
    <property type="project" value="GO_Central"/>
</dbReference>
<dbReference type="GO" id="GO:0006886">
    <property type="term" value="P:intracellular protein transport"/>
    <property type="evidence" value="ECO:0000266"/>
    <property type="project" value="PomBase"/>
</dbReference>
<dbReference type="GO" id="GO:0034499">
    <property type="term" value="P:late endosome to Golgi transport"/>
    <property type="evidence" value="ECO:0000318"/>
    <property type="project" value="GO_Central"/>
</dbReference>
<dbReference type="CDD" id="cd07295">
    <property type="entry name" value="PX_Grd19"/>
    <property type="match status" value="1"/>
</dbReference>
<dbReference type="Gene3D" id="3.30.1520.10">
    <property type="entry name" value="Phox-like domain"/>
    <property type="match status" value="1"/>
</dbReference>
<dbReference type="InterPro" id="IPR001683">
    <property type="entry name" value="PX_dom"/>
</dbReference>
<dbReference type="InterPro" id="IPR036871">
    <property type="entry name" value="PX_dom_sf"/>
</dbReference>
<dbReference type="InterPro" id="IPR042138">
    <property type="entry name" value="PX_Grd19_PX"/>
</dbReference>
<dbReference type="InterPro" id="IPR051074">
    <property type="entry name" value="Sorting_Nexin"/>
</dbReference>
<dbReference type="PANTHER" id="PTHR45963">
    <property type="entry name" value="RE52028P"/>
    <property type="match status" value="1"/>
</dbReference>
<dbReference type="PANTHER" id="PTHR45963:SF2">
    <property type="entry name" value="RE52028P"/>
    <property type="match status" value="1"/>
</dbReference>
<dbReference type="Pfam" id="PF00787">
    <property type="entry name" value="PX"/>
    <property type="match status" value="1"/>
</dbReference>
<dbReference type="SMART" id="SM00312">
    <property type="entry name" value="PX"/>
    <property type="match status" value="1"/>
</dbReference>
<dbReference type="SUPFAM" id="SSF64268">
    <property type="entry name" value="PX domain"/>
    <property type="match status" value="1"/>
</dbReference>
<dbReference type="PROSITE" id="PS50195">
    <property type="entry name" value="PX"/>
    <property type="match status" value="1"/>
</dbReference>
<name>SNX3_SCHPO</name>
<organism>
    <name type="scientific">Schizosaccharomyces pombe (strain 972 / ATCC 24843)</name>
    <name type="common">Fission yeast</name>
    <dbReference type="NCBI Taxonomy" id="284812"/>
    <lineage>
        <taxon>Eukaryota</taxon>
        <taxon>Fungi</taxon>
        <taxon>Dikarya</taxon>
        <taxon>Ascomycota</taxon>
        <taxon>Taphrinomycotina</taxon>
        <taxon>Schizosaccharomycetes</taxon>
        <taxon>Schizosaccharomycetales</taxon>
        <taxon>Schizosaccharomycetaceae</taxon>
        <taxon>Schizosaccharomyces</taxon>
    </lineage>
</organism>
<feature type="chain" id="PRO_0000238590" description="Sorting nexin-3">
    <location>
        <begin position="1"/>
        <end position="143"/>
    </location>
</feature>
<feature type="domain" description="PX" evidence="2">
    <location>
        <begin position="23"/>
        <end position="140"/>
    </location>
</feature>
<feature type="binding site" evidence="1">
    <location>
        <position position="66"/>
    </location>
    <ligand>
        <name>a 1,2-diacyl-sn-glycero-3-phospho-(1D-myo-inositol-3-phosphate)</name>
        <dbReference type="ChEBI" id="CHEBI:58088"/>
    </ligand>
</feature>
<feature type="binding site" evidence="1">
    <location>
        <position position="68"/>
    </location>
    <ligand>
        <name>a 1,2-diacyl-sn-glycero-3-phospho-(1D-myo-inositol-3-phosphate)</name>
        <dbReference type="ChEBI" id="CHEBI:58088"/>
    </ligand>
</feature>
<feature type="binding site" evidence="1">
    <location>
        <position position="92"/>
    </location>
    <ligand>
        <name>a 1,2-diacyl-sn-glycero-3-phospho-(1D-myo-inositol-3-phosphate)</name>
        <dbReference type="ChEBI" id="CHEBI:58088"/>
    </ligand>
</feature>
<feature type="binding site" evidence="1">
    <location>
        <position position="97"/>
    </location>
    <ligand>
        <name>a 1,2-diacyl-sn-glycero-3-phospho-(1D-myo-inositol-3-phosphate)</name>
        <dbReference type="ChEBI" id="CHEBI:58088"/>
    </ligand>
</feature>
<feature type="binding site" evidence="1">
    <location>
        <position position="106"/>
    </location>
    <ligand>
        <name>a 1,2-diacyl-sn-glycero-3-phospho-(1D-myo-inositol-3-phosphate)</name>
        <dbReference type="ChEBI" id="CHEBI:58088"/>
    </ligand>
</feature>
<evidence type="ECO:0000250" key="1"/>
<evidence type="ECO:0000255" key="2">
    <source>
        <dbReference type="PROSITE-ProRule" id="PRU00147"/>
    </source>
</evidence>
<evidence type="ECO:0000305" key="3"/>
<sequence length="143" mass="16961">MDKLSRPEIRQQTTQQMYDVPENILEIDVINPQTHGIGRNMFTTYEIVCRTNMPYFRLHNSSVRRRYSEFEKFHDMLERESGRVSIPPLPGKIFTQRFRDDVIEERRQGLENFLRLVAGHPLIQTHSRVLSSFLQSPEFKPTP</sequence>
<comment type="function">
    <text evidence="1">Required for retention of late Golgi membrane proteins. Component of the retrieval machinery that functions by direct interaction with the cytosolic tails of certain TGN membrane proteins during the sorting/budding process at the prevacuolar compartment. Binds phosphatidylinositol 3-phosphate (PtdIns(P3)) (By similarity).</text>
</comment>
<comment type="subcellular location">
    <subcellularLocation>
        <location evidence="1">Cytoplasm</location>
    </subcellularLocation>
    <subcellularLocation>
        <location evidence="3">Golgi apparatus membrane</location>
        <topology evidence="3">Peripheral membrane protein</topology>
        <orientation evidence="3">Cytoplasmic side</orientation>
    </subcellularLocation>
    <subcellularLocation>
        <location evidence="3">Prevacuolar compartment membrane</location>
        <topology evidence="3">Peripheral membrane protein</topology>
        <orientation evidence="3">Cytoplasmic side</orientation>
    </subcellularLocation>
</comment>
<comment type="domain">
    <text evidence="1">The PX domain binds phosphatidylinositol 3-phosphate which is necessary for peripheral membrane localization.</text>
</comment>
<comment type="similarity">
    <text evidence="3">Belongs to the sorting nexin family.</text>
</comment>